<keyword id="KW-0963">Cytoplasm</keyword>
<keyword id="KW-0460">Magnesium</keyword>
<keyword id="KW-0479">Metal-binding</keyword>
<keyword id="KW-0548">Nucleotidyltransferase</keyword>
<keyword id="KW-0694">RNA-binding</keyword>
<keyword id="KW-0808">Transferase</keyword>
<evidence type="ECO:0000255" key="1">
    <source>
        <dbReference type="HAMAP-Rule" id="MF_01595"/>
    </source>
</evidence>
<organism>
    <name type="scientific">Microcystis aeruginosa (strain NIES-843 / IAM M-2473)</name>
    <dbReference type="NCBI Taxonomy" id="449447"/>
    <lineage>
        <taxon>Bacteria</taxon>
        <taxon>Bacillati</taxon>
        <taxon>Cyanobacteriota</taxon>
        <taxon>Cyanophyceae</taxon>
        <taxon>Oscillatoriophycideae</taxon>
        <taxon>Chroococcales</taxon>
        <taxon>Microcystaceae</taxon>
        <taxon>Microcystis</taxon>
    </lineage>
</organism>
<gene>
    <name evidence="1" type="primary">pnp</name>
    <name type="ordered locus">MAE_53390</name>
</gene>
<sequence>MEEFDKSISFDGRDIRLKIGLLAPQAGGSVLIQSGETAVLVTATTAKAREGVDFLPLTVDYEERLYAAGRIPGGFLRREGRPPEKAILTGRLIDRPLRPLFPNWMRDDIQVVATTLSMDEEVPPDVLAVTGASVAVLLAGIPFQGPMAAVRVGLLGDEFIINPTYKEIHNGELDLVVAGSPEGVVMIEAGANQLPERDIIEAIDFGYEAVRDLITAQRELIDQLGIPLVTREAPAVNETVQNFLREQAKEEIKQILSQFTLSKTERDEKLEAIENRIKETITALPDEDTLKAPTLEEPKLIGNLFKDLTKKLMRAQIIEDGVRVDGRQLDEVRPISCRVGVLPRRVHGSGLFNRGLTQVLSIATLGTPGDAQDLGDDLHPEDEKRYLHHYNFPPFSVGETRPMRSPGRREIGHGALAERAIVPVLPPQEEFPYVLRVVSEVLSSNGSTSMGSVCGSTLALMDAGVPLKKPVSGAAMGLIKEGEEVRILTDIQGIEDFLGDMDFKVAGTDSGITALQMDMKIPGLSMEVVAKAIEQALPARKHILEKMLATLEKPRTELSPHAPRLLTIKIDPDLIGLVIGPGGKTVKGITEQTGTKIDIDDDGTVTISSTDGEQAEKAKRLIYNMTRKLNEGEVYLGRVTRIIQIGAFVEVLPGKEGMIHISQLAEGRVGKVEDEVAVGDEVLVKVREIDSKGRLNLTRLGIHPDEAAAARKAATVV</sequence>
<proteinExistence type="inferred from homology"/>
<dbReference type="EC" id="2.7.7.8" evidence="1"/>
<dbReference type="EMBL" id="AP009552">
    <property type="protein sequence ID" value="BAG05161.1"/>
    <property type="molecule type" value="Genomic_DNA"/>
</dbReference>
<dbReference type="RefSeq" id="WP_012267692.1">
    <property type="nucleotide sequence ID" value="NC_010296.1"/>
</dbReference>
<dbReference type="SMR" id="B0JYC3"/>
<dbReference type="STRING" id="449447.MAE_53390"/>
<dbReference type="PaxDb" id="449447-MAE_53390"/>
<dbReference type="EnsemblBacteria" id="BAG05161">
    <property type="protein sequence ID" value="BAG05161"/>
    <property type="gene ID" value="MAE_53390"/>
</dbReference>
<dbReference type="KEGG" id="mar:MAE_53390"/>
<dbReference type="PATRIC" id="fig|449447.4.peg.4866"/>
<dbReference type="eggNOG" id="COG1185">
    <property type="taxonomic scope" value="Bacteria"/>
</dbReference>
<dbReference type="HOGENOM" id="CLU_004217_2_2_3"/>
<dbReference type="BioCyc" id="MAER449447:MAE_RS23215-MONOMER"/>
<dbReference type="Proteomes" id="UP000001510">
    <property type="component" value="Chromosome"/>
</dbReference>
<dbReference type="GO" id="GO:0005829">
    <property type="term" value="C:cytosol"/>
    <property type="evidence" value="ECO:0007669"/>
    <property type="project" value="TreeGrafter"/>
</dbReference>
<dbReference type="GO" id="GO:0000175">
    <property type="term" value="F:3'-5'-RNA exonuclease activity"/>
    <property type="evidence" value="ECO:0007669"/>
    <property type="project" value="TreeGrafter"/>
</dbReference>
<dbReference type="GO" id="GO:0000287">
    <property type="term" value="F:magnesium ion binding"/>
    <property type="evidence" value="ECO:0007669"/>
    <property type="project" value="UniProtKB-UniRule"/>
</dbReference>
<dbReference type="GO" id="GO:0004654">
    <property type="term" value="F:polyribonucleotide nucleotidyltransferase activity"/>
    <property type="evidence" value="ECO:0007669"/>
    <property type="project" value="UniProtKB-UniRule"/>
</dbReference>
<dbReference type="GO" id="GO:0003723">
    <property type="term" value="F:RNA binding"/>
    <property type="evidence" value="ECO:0007669"/>
    <property type="project" value="UniProtKB-UniRule"/>
</dbReference>
<dbReference type="GO" id="GO:0006402">
    <property type="term" value="P:mRNA catabolic process"/>
    <property type="evidence" value="ECO:0007669"/>
    <property type="project" value="UniProtKB-UniRule"/>
</dbReference>
<dbReference type="GO" id="GO:0006396">
    <property type="term" value="P:RNA processing"/>
    <property type="evidence" value="ECO:0007669"/>
    <property type="project" value="InterPro"/>
</dbReference>
<dbReference type="CDD" id="cd02393">
    <property type="entry name" value="KH-I_PNPase"/>
    <property type="match status" value="1"/>
</dbReference>
<dbReference type="CDD" id="cd11363">
    <property type="entry name" value="RNase_PH_PNPase_1"/>
    <property type="match status" value="1"/>
</dbReference>
<dbReference type="CDD" id="cd11364">
    <property type="entry name" value="RNase_PH_PNPase_2"/>
    <property type="match status" value="1"/>
</dbReference>
<dbReference type="CDD" id="cd04472">
    <property type="entry name" value="S1_PNPase"/>
    <property type="match status" value="1"/>
</dbReference>
<dbReference type="FunFam" id="3.30.1370.10:FF:000001">
    <property type="entry name" value="Polyribonucleotide nucleotidyltransferase"/>
    <property type="match status" value="1"/>
</dbReference>
<dbReference type="FunFam" id="3.30.230.70:FF:000001">
    <property type="entry name" value="Polyribonucleotide nucleotidyltransferase"/>
    <property type="match status" value="1"/>
</dbReference>
<dbReference type="FunFam" id="3.30.230.70:FF:000002">
    <property type="entry name" value="Polyribonucleotide nucleotidyltransferase"/>
    <property type="match status" value="1"/>
</dbReference>
<dbReference type="Gene3D" id="3.30.230.70">
    <property type="entry name" value="GHMP Kinase, N-terminal domain"/>
    <property type="match status" value="2"/>
</dbReference>
<dbReference type="Gene3D" id="3.30.1370.10">
    <property type="entry name" value="K Homology domain, type 1"/>
    <property type="match status" value="1"/>
</dbReference>
<dbReference type="Gene3D" id="2.40.50.140">
    <property type="entry name" value="Nucleic acid-binding proteins"/>
    <property type="match status" value="1"/>
</dbReference>
<dbReference type="HAMAP" id="MF_01595">
    <property type="entry name" value="PNPase"/>
    <property type="match status" value="1"/>
</dbReference>
<dbReference type="InterPro" id="IPR001247">
    <property type="entry name" value="ExoRNase_PH_dom1"/>
</dbReference>
<dbReference type="InterPro" id="IPR015847">
    <property type="entry name" value="ExoRNase_PH_dom2"/>
</dbReference>
<dbReference type="InterPro" id="IPR036345">
    <property type="entry name" value="ExoRNase_PH_dom2_sf"/>
</dbReference>
<dbReference type="InterPro" id="IPR004087">
    <property type="entry name" value="KH_dom"/>
</dbReference>
<dbReference type="InterPro" id="IPR004088">
    <property type="entry name" value="KH_dom_type_1"/>
</dbReference>
<dbReference type="InterPro" id="IPR036612">
    <property type="entry name" value="KH_dom_type_1_sf"/>
</dbReference>
<dbReference type="InterPro" id="IPR012340">
    <property type="entry name" value="NA-bd_OB-fold"/>
</dbReference>
<dbReference type="InterPro" id="IPR012162">
    <property type="entry name" value="PNPase"/>
</dbReference>
<dbReference type="InterPro" id="IPR027408">
    <property type="entry name" value="PNPase/RNase_PH_dom_sf"/>
</dbReference>
<dbReference type="InterPro" id="IPR015848">
    <property type="entry name" value="PNPase_PH_RNA-bd_bac/org-type"/>
</dbReference>
<dbReference type="InterPro" id="IPR020568">
    <property type="entry name" value="Ribosomal_Su5_D2-typ_SF"/>
</dbReference>
<dbReference type="InterPro" id="IPR003029">
    <property type="entry name" value="S1_domain"/>
</dbReference>
<dbReference type="NCBIfam" id="TIGR03591">
    <property type="entry name" value="polynuc_phos"/>
    <property type="match status" value="1"/>
</dbReference>
<dbReference type="NCBIfam" id="NF008805">
    <property type="entry name" value="PRK11824.1"/>
    <property type="match status" value="1"/>
</dbReference>
<dbReference type="PANTHER" id="PTHR11252">
    <property type="entry name" value="POLYRIBONUCLEOTIDE NUCLEOTIDYLTRANSFERASE"/>
    <property type="match status" value="1"/>
</dbReference>
<dbReference type="PANTHER" id="PTHR11252:SF0">
    <property type="entry name" value="POLYRIBONUCLEOTIDE NUCLEOTIDYLTRANSFERASE 1, MITOCHONDRIAL"/>
    <property type="match status" value="1"/>
</dbReference>
<dbReference type="Pfam" id="PF00013">
    <property type="entry name" value="KH_1"/>
    <property type="match status" value="1"/>
</dbReference>
<dbReference type="Pfam" id="PF03726">
    <property type="entry name" value="PNPase"/>
    <property type="match status" value="1"/>
</dbReference>
<dbReference type="Pfam" id="PF01138">
    <property type="entry name" value="RNase_PH"/>
    <property type="match status" value="2"/>
</dbReference>
<dbReference type="Pfam" id="PF03725">
    <property type="entry name" value="RNase_PH_C"/>
    <property type="match status" value="2"/>
</dbReference>
<dbReference type="Pfam" id="PF00575">
    <property type="entry name" value="S1"/>
    <property type="match status" value="1"/>
</dbReference>
<dbReference type="PIRSF" id="PIRSF005499">
    <property type="entry name" value="PNPase"/>
    <property type="match status" value="1"/>
</dbReference>
<dbReference type="SMART" id="SM00322">
    <property type="entry name" value="KH"/>
    <property type="match status" value="1"/>
</dbReference>
<dbReference type="SMART" id="SM00316">
    <property type="entry name" value="S1"/>
    <property type="match status" value="1"/>
</dbReference>
<dbReference type="SUPFAM" id="SSF54791">
    <property type="entry name" value="Eukaryotic type KH-domain (KH-domain type I)"/>
    <property type="match status" value="1"/>
</dbReference>
<dbReference type="SUPFAM" id="SSF50249">
    <property type="entry name" value="Nucleic acid-binding proteins"/>
    <property type="match status" value="1"/>
</dbReference>
<dbReference type="SUPFAM" id="SSF55666">
    <property type="entry name" value="Ribonuclease PH domain 2-like"/>
    <property type="match status" value="2"/>
</dbReference>
<dbReference type="SUPFAM" id="SSF54211">
    <property type="entry name" value="Ribosomal protein S5 domain 2-like"/>
    <property type="match status" value="2"/>
</dbReference>
<dbReference type="PROSITE" id="PS50084">
    <property type="entry name" value="KH_TYPE_1"/>
    <property type="match status" value="1"/>
</dbReference>
<dbReference type="PROSITE" id="PS50126">
    <property type="entry name" value="S1"/>
    <property type="match status" value="1"/>
</dbReference>
<protein>
    <recommendedName>
        <fullName evidence="1">Polyribonucleotide nucleotidyltransferase</fullName>
        <ecNumber evidence="1">2.7.7.8</ecNumber>
    </recommendedName>
    <alternativeName>
        <fullName evidence="1">Polynucleotide phosphorylase</fullName>
        <shortName evidence="1">PNPase</shortName>
    </alternativeName>
</protein>
<comment type="function">
    <text evidence="1">Involved in mRNA degradation. Catalyzes the phosphorolysis of single-stranded polyribonucleotides processively in the 3'- to 5'-direction.</text>
</comment>
<comment type="catalytic activity">
    <reaction evidence="1">
        <text>RNA(n+1) + phosphate = RNA(n) + a ribonucleoside 5'-diphosphate</text>
        <dbReference type="Rhea" id="RHEA:22096"/>
        <dbReference type="Rhea" id="RHEA-COMP:14527"/>
        <dbReference type="Rhea" id="RHEA-COMP:17342"/>
        <dbReference type="ChEBI" id="CHEBI:43474"/>
        <dbReference type="ChEBI" id="CHEBI:57930"/>
        <dbReference type="ChEBI" id="CHEBI:140395"/>
        <dbReference type="EC" id="2.7.7.8"/>
    </reaction>
</comment>
<comment type="cofactor">
    <cofactor evidence="1">
        <name>Mg(2+)</name>
        <dbReference type="ChEBI" id="CHEBI:18420"/>
    </cofactor>
</comment>
<comment type="subcellular location">
    <subcellularLocation>
        <location evidence="1">Cytoplasm</location>
    </subcellularLocation>
</comment>
<comment type="similarity">
    <text evidence="1">Belongs to the polyribonucleotide nucleotidyltransferase family.</text>
</comment>
<feature type="chain" id="PRO_1000087992" description="Polyribonucleotide nucleotidyltransferase">
    <location>
        <begin position="1"/>
        <end position="717"/>
    </location>
</feature>
<feature type="domain" description="KH" evidence="1">
    <location>
        <begin position="563"/>
        <end position="622"/>
    </location>
</feature>
<feature type="domain" description="S1 motif" evidence="1">
    <location>
        <begin position="632"/>
        <end position="700"/>
    </location>
</feature>
<feature type="binding site" evidence="1">
    <location>
        <position position="496"/>
    </location>
    <ligand>
        <name>Mg(2+)</name>
        <dbReference type="ChEBI" id="CHEBI:18420"/>
    </ligand>
</feature>
<feature type="binding site" evidence="1">
    <location>
        <position position="502"/>
    </location>
    <ligand>
        <name>Mg(2+)</name>
        <dbReference type="ChEBI" id="CHEBI:18420"/>
    </ligand>
</feature>
<reference key="1">
    <citation type="journal article" date="2007" name="DNA Res.">
        <title>Complete genomic structure of the bloom-forming toxic cyanobacterium Microcystis aeruginosa NIES-843.</title>
        <authorList>
            <person name="Kaneko T."/>
            <person name="Nakajima N."/>
            <person name="Okamoto S."/>
            <person name="Suzuki I."/>
            <person name="Tanabe Y."/>
            <person name="Tamaoki M."/>
            <person name="Nakamura Y."/>
            <person name="Kasai F."/>
            <person name="Watanabe A."/>
            <person name="Kawashima K."/>
            <person name="Kishida Y."/>
            <person name="Ono A."/>
            <person name="Shimizu Y."/>
            <person name="Takahashi C."/>
            <person name="Minami C."/>
            <person name="Fujishiro T."/>
            <person name="Kohara M."/>
            <person name="Katoh M."/>
            <person name="Nakazaki N."/>
            <person name="Nakayama S."/>
            <person name="Yamada M."/>
            <person name="Tabata S."/>
            <person name="Watanabe M.M."/>
        </authorList>
    </citation>
    <scope>NUCLEOTIDE SEQUENCE [LARGE SCALE GENOMIC DNA]</scope>
    <source>
        <strain>NIES-843 / IAM M-247</strain>
    </source>
</reference>
<accession>B0JYC3</accession>
<name>PNP_MICAN</name>